<sequence length="132" mass="14362">MTMTDPIADMLTRLRNANSAYHDTVSMPYSKLKSHIAEILQAEGYITSWTVEDAEVGKKLTLDLKFGPNRERAIAGLRRVSKPGLRVYAKSTNLPRVLGGLGVAILSTSSGLLTDKQANKKGVGGEVLAYVW</sequence>
<feature type="chain" id="PRO_1000085927" description="Small ribosomal subunit protein uS8">
    <location>
        <begin position="1"/>
        <end position="132"/>
    </location>
</feature>
<name>RS8_KINRD</name>
<comment type="function">
    <text evidence="1">One of the primary rRNA binding proteins, it binds directly to 16S rRNA central domain where it helps coordinate assembly of the platform of the 30S subunit.</text>
</comment>
<comment type="subunit">
    <text evidence="1">Part of the 30S ribosomal subunit. Contacts proteins S5 and S12.</text>
</comment>
<comment type="similarity">
    <text evidence="1">Belongs to the universal ribosomal protein uS8 family.</text>
</comment>
<organism>
    <name type="scientific">Kineococcus radiotolerans (strain ATCC BAA-149 / DSM 14245 / SRS30216)</name>
    <dbReference type="NCBI Taxonomy" id="266940"/>
    <lineage>
        <taxon>Bacteria</taxon>
        <taxon>Bacillati</taxon>
        <taxon>Actinomycetota</taxon>
        <taxon>Actinomycetes</taxon>
        <taxon>Kineosporiales</taxon>
        <taxon>Kineosporiaceae</taxon>
        <taxon>Kineococcus</taxon>
    </lineage>
</organism>
<accession>A6W5V2</accession>
<keyword id="KW-1185">Reference proteome</keyword>
<keyword id="KW-0687">Ribonucleoprotein</keyword>
<keyword id="KW-0689">Ribosomal protein</keyword>
<keyword id="KW-0694">RNA-binding</keyword>
<keyword id="KW-0699">rRNA-binding</keyword>
<evidence type="ECO:0000255" key="1">
    <source>
        <dbReference type="HAMAP-Rule" id="MF_01302"/>
    </source>
</evidence>
<evidence type="ECO:0000305" key="2"/>
<protein>
    <recommendedName>
        <fullName evidence="1">Small ribosomal subunit protein uS8</fullName>
    </recommendedName>
    <alternativeName>
        <fullName evidence="2">30S ribosomal protein S8</fullName>
    </alternativeName>
</protein>
<proteinExistence type="inferred from homology"/>
<gene>
    <name evidence="1" type="primary">rpsH</name>
    <name type="ordered locus">Krad_0702</name>
</gene>
<dbReference type="EMBL" id="CP000750">
    <property type="protein sequence ID" value="ABS02191.1"/>
    <property type="molecule type" value="Genomic_DNA"/>
</dbReference>
<dbReference type="RefSeq" id="WP_012084966.1">
    <property type="nucleotide sequence ID" value="NC_009664.2"/>
</dbReference>
<dbReference type="SMR" id="A6W5V2"/>
<dbReference type="STRING" id="266940.Krad_0702"/>
<dbReference type="KEGG" id="kra:Krad_0702"/>
<dbReference type="eggNOG" id="COG0096">
    <property type="taxonomic scope" value="Bacteria"/>
</dbReference>
<dbReference type="HOGENOM" id="CLU_098428_0_1_11"/>
<dbReference type="OrthoDB" id="9802617at2"/>
<dbReference type="Proteomes" id="UP000001116">
    <property type="component" value="Chromosome"/>
</dbReference>
<dbReference type="GO" id="GO:1990904">
    <property type="term" value="C:ribonucleoprotein complex"/>
    <property type="evidence" value="ECO:0007669"/>
    <property type="project" value="UniProtKB-KW"/>
</dbReference>
<dbReference type="GO" id="GO:0005840">
    <property type="term" value="C:ribosome"/>
    <property type="evidence" value="ECO:0007669"/>
    <property type="project" value="UniProtKB-KW"/>
</dbReference>
<dbReference type="GO" id="GO:0019843">
    <property type="term" value="F:rRNA binding"/>
    <property type="evidence" value="ECO:0007669"/>
    <property type="project" value="UniProtKB-UniRule"/>
</dbReference>
<dbReference type="GO" id="GO:0003735">
    <property type="term" value="F:structural constituent of ribosome"/>
    <property type="evidence" value="ECO:0007669"/>
    <property type="project" value="InterPro"/>
</dbReference>
<dbReference type="GO" id="GO:0006412">
    <property type="term" value="P:translation"/>
    <property type="evidence" value="ECO:0007669"/>
    <property type="project" value="UniProtKB-UniRule"/>
</dbReference>
<dbReference type="FunFam" id="3.30.1370.30:FF:000002">
    <property type="entry name" value="30S ribosomal protein S8"/>
    <property type="match status" value="1"/>
</dbReference>
<dbReference type="FunFam" id="3.30.1490.10:FF:000001">
    <property type="entry name" value="30S ribosomal protein S8"/>
    <property type="match status" value="1"/>
</dbReference>
<dbReference type="Gene3D" id="3.30.1370.30">
    <property type="match status" value="1"/>
</dbReference>
<dbReference type="Gene3D" id="3.30.1490.10">
    <property type="match status" value="1"/>
</dbReference>
<dbReference type="HAMAP" id="MF_01302_B">
    <property type="entry name" value="Ribosomal_uS8_B"/>
    <property type="match status" value="1"/>
</dbReference>
<dbReference type="InterPro" id="IPR000630">
    <property type="entry name" value="Ribosomal_uS8"/>
</dbReference>
<dbReference type="InterPro" id="IPR035987">
    <property type="entry name" value="Ribosomal_uS8_sf"/>
</dbReference>
<dbReference type="NCBIfam" id="NF001109">
    <property type="entry name" value="PRK00136.1"/>
    <property type="match status" value="1"/>
</dbReference>
<dbReference type="PANTHER" id="PTHR11758">
    <property type="entry name" value="40S RIBOSOMAL PROTEIN S15A"/>
    <property type="match status" value="1"/>
</dbReference>
<dbReference type="Pfam" id="PF00410">
    <property type="entry name" value="Ribosomal_S8"/>
    <property type="match status" value="1"/>
</dbReference>
<dbReference type="SUPFAM" id="SSF56047">
    <property type="entry name" value="Ribosomal protein S8"/>
    <property type="match status" value="1"/>
</dbReference>
<reference key="1">
    <citation type="journal article" date="2008" name="PLoS ONE">
        <title>Survival in nuclear waste, extreme resistance, and potential applications gleaned from the genome sequence of Kineococcus radiotolerans SRS30216.</title>
        <authorList>
            <person name="Bagwell C.E."/>
            <person name="Bhat S."/>
            <person name="Hawkins G.M."/>
            <person name="Smith B.W."/>
            <person name="Biswas T."/>
            <person name="Hoover T.R."/>
            <person name="Saunders E."/>
            <person name="Han C.S."/>
            <person name="Tsodikov O.V."/>
            <person name="Shimkets L.J."/>
        </authorList>
    </citation>
    <scope>NUCLEOTIDE SEQUENCE [LARGE SCALE GENOMIC DNA]</scope>
    <source>
        <strain>ATCC BAA-149 / DSM 14245 / SRS30216</strain>
    </source>
</reference>